<organism>
    <name type="scientific">Tupiella akineta</name>
    <name type="common">Green alga</name>
    <name type="synonym">Pseudendoclonium akinetum</name>
    <dbReference type="NCBI Taxonomy" id="160070"/>
    <lineage>
        <taxon>Eukaryota</taxon>
        <taxon>Viridiplantae</taxon>
        <taxon>Chlorophyta</taxon>
        <taxon>Ulvophyceae</taxon>
        <taxon>OUU clade</taxon>
        <taxon>Ulotrichales</taxon>
        <taxon>Tupiellaceae</taxon>
        <taxon>Tupiella</taxon>
    </lineage>
</organism>
<sequence>MVLSIQTNKNVGSITQIIGPVIDAAFAPGQLPNIYNALVIKGTNQAGQEVAVTCEVQQLLGDHCVRAVAMNATDGLMRGMNIVDTGKPLTVPVGKVTLGRIFNVLGEPVDGLEAVDSKESLPIHRKAPAFVDLDTKLAIFETGIKVVDLLAPYRRGGKIGLFGGAGVGKTVLIMELINNIAKAHGGVSVFGGVGERTREGNDLYMEMKESGVIQEKNMSASKVALVYGQMNEPPGARMRVGLTALTMAEYFRDINKQDVLLFIDNIFRFVQAGSEVSALLGRMPSAVGYQPTLATEMGGLQERITSTKDGSITSIQAVYVPADDLTDPAPATTFAHLDATTVLSRGLASKGIYPAVDPLDSTSTMLQPWIVGEEHYSCAQNVKETLQRYKELQDIIAILGLDELSEEDRKVVARARKIERFLSQPFFVAEVFTGSPGKYVSLKETIQGFNKILTGELDDLPEQAFYLVGTLDEAVAKAATL</sequence>
<accession>Q3ZJ68</accession>
<feature type="chain" id="PRO_0000254517" description="ATP synthase subunit beta, chloroplastic">
    <location>
        <begin position="1"/>
        <end position="481"/>
    </location>
</feature>
<feature type="binding site" evidence="1">
    <location>
        <begin position="163"/>
        <end position="170"/>
    </location>
    <ligand>
        <name>ATP</name>
        <dbReference type="ChEBI" id="CHEBI:30616"/>
    </ligand>
</feature>
<gene>
    <name evidence="1" type="primary">atpB</name>
</gene>
<proteinExistence type="inferred from homology"/>
<comment type="function">
    <text evidence="1">Produces ATP from ADP in the presence of a proton gradient across the membrane. The catalytic sites are hosted primarily by the beta subunits.</text>
</comment>
<comment type="catalytic activity">
    <reaction evidence="1">
        <text>ATP + H2O + 4 H(+)(in) = ADP + phosphate + 5 H(+)(out)</text>
        <dbReference type="Rhea" id="RHEA:57720"/>
        <dbReference type="ChEBI" id="CHEBI:15377"/>
        <dbReference type="ChEBI" id="CHEBI:15378"/>
        <dbReference type="ChEBI" id="CHEBI:30616"/>
        <dbReference type="ChEBI" id="CHEBI:43474"/>
        <dbReference type="ChEBI" id="CHEBI:456216"/>
        <dbReference type="EC" id="7.1.2.2"/>
    </reaction>
</comment>
<comment type="subunit">
    <text evidence="1">F-type ATPases have 2 components, CF(1) - the catalytic core - and CF(0) - the membrane proton channel. CF(1) has five subunits: alpha(3), beta(3), gamma(1), delta(1), epsilon(1). CF(0) has four main subunits: a(1), b(1), b'(1) and c(9-12).</text>
</comment>
<comment type="subcellular location">
    <subcellularLocation>
        <location evidence="1">Plastid</location>
        <location evidence="1">Chloroplast thylakoid membrane</location>
        <topology evidence="1">Peripheral membrane protein</topology>
    </subcellularLocation>
</comment>
<comment type="similarity">
    <text evidence="1">Belongs to the ATPase alpha/beta chains family.</text>
</comment>
<name>ATPB_TUPAK</name>
<geneLocation type="chloroplast"/>
<evidence type="ECO:0000255" key="1">
    <source>
        <dbReference type="HAMAP-Rule" id="MF_01347"/>
    </source>
</evidence>
<reference key="1">
    <citation type="journal article" date="2005" name="Mol. Biol. Evol.">
        <title>The chloroplast genome sequence of the green alga Pseudendoclonium akinetum (Ulvophyceae) reveals unusual structural features and new insights into the branching order of chlorophyte lineages.</title>
        <authorList>
            <person name="Pombert J.-F."/>
            <person name="Otis C."/>
            <person name="Lemieux C."/>
            <person name="Turmel M."/>
        </authorList>
    </citation>
    <scope>NUCLEOTIDE SEQUENCE [LARGE SCALE GENOMIC DNA]</scope>
    <source>
        <strain>UTEX 1912</strain>
    </source>
</reference>
<keyword id="KW-0066">ATP synthesis</keyword>
<keyword id="KW-0067">ATP-binding</keyword>
<keyword id="KW-0139">CF(1)</keyword>
<keyword id="KW-0150">Chloroplast</keyword>
<keyword id="KW-0375">Hydrogen ion transport</keyword>
<keyword id="KW-0406">Ion transport</keyword>
<keyword id="KW-0472">Membrane</keyword>
<keyword id="KW-0547">Nucleotide-binding</keyword>
<keyword id="KW-0934">Plastid</keyword>
<keyword id="KW-0793">Thylakoid</keyword>
<keyword id="KW-1278">Translocase</keyword>
<keyword id="KW-0813">Transport</keyword>
<protein>
    <recommendedName>
        <fullName evidence="1">ATP synthase subunit beta, chloroplastic</fullName>
        <ecNumber evidence="1">7.1.2.2</ecNumber>
    </recommendedName>
    <alternativeName>
        <fullName evidence="1">ATP synthase F1 sector subunit beta</fullName>
    </alternativeName>
    <alternativeName>
        <fullName evidence="1">F-ATPase subunit beta</fullName>
    </alternativeName>
</protein>
<dbReference type="EC" id="7.1.2.2" evidence="1"/>
<dbReference type="EMBL" id="AY835431">
    <property type="protein sequence ID" value="AAV80623.1"/>
    <property type="molecule type" value="Genomic_DNA"/>
</dbReference>
<dbReference type="RefSeq" id="YP_636199.1">
    <property type="nucleotide sequence ID" value="NC_008114.1"/>
</dbReference>
<dbReference type="SMR" id="Q3ZJ68"/>
<dbReference type="GeneID" id="4108803"/>
<dbReference type="GO" id="GO:0009535">
    <property type="term" value="C:chloroplast thylakoid membrane"/>
    <property type="evidence" value="ECO:0007669"/>
    <property type="project" value="UniProtKB-SubCell"/>
</dbReference>
<dbReference type="GO" id="GO:0005739">
    <property type="term" value="C:mitochondrion"/>
    <property type="evidence" value="ECO:0007669"/>
    <property type="project" value="GOC"/>
</dbReference>
<dbReference type="GO" id="GO:0045259">
    <property type="term" value="C:proton-transporting ATP synthase complex"/>
    <property type="evidence" value="ECO:0007669"/>
    <property type="project" value="UniProtKB-KW"/>
</dbReference>
<dbReference type="GO" id="GO:0005524">
    <property type="term" value="F:ATP binding"/>
    <property type="evidence" value="ECO:0007669"/>
    <property type="project" value="UniProtKB-UniRule"/>
</dbReference>
<dbReference type="GO" id="GO:0016887">
    <property type="term" value="F:ATP hydrolysis activity"/>
    <property type="evidence" value="ECO:0007669"/>
    <property type="project" value="InterPro"/>
</dbReference>
<dbReference type="GO" id="GO:0046933">
    <property type="term" value="F:proton-transporting ATP synthase activity, rotational mechanism"/>
    <property type="evidence" value="ECO:0007669"/>
    <property type="project" value="UniProtKB-UniRule"/>
</dbReference>
<dbReference type="GO" id="GO:0042776">
    <property type="term" value="P:proton motive force-driven mitochondrial ATP synthesis"/>
    <property type="evidence" value="ECO:0007669"/>
    <property type="project" value="TreeGrafter"/>
</dbReference>
<dbReference type="CDD" id="cd18110">
    <property type="entry name" value="ATP-synt_F1_beta_C"/>
    <property type="match status" value="1"/>
</dbReference>
<dbReference type="CDD" id="cd18115">
    <property type="entry name" value="ATP-synt_F1_beta_N"/>
    <property type="match status" value="1"/>
</dbReference>
<dbReference type="CDD" id="cd01133">
    <property type="entry name" value="F1-ATPase_beta_CD"/>
    <property type="match status" value="1"/>
</dbReference>
<dbReference type="FunFam" id="1.10.1140.10:FF:000001">
    <property type="entry name" value="ATP synthase subunit beta"/>
    <property type="match status" value="1"/>
</dbReference>
<dbReference type="FunFam" id="3.40.50.12240:FF:000006">
    <property type="entry name" value="ATP synthase subunit beta"/>
    <property type="match status" value="1"/>
</dbReference>
<dbReference type="FunFam" id="3.40.50.300:FF:000026">
    <property type="entry name" value="ATP synthase subunit beta"/>
    <property type="match status" value="1"/>
</dbReference>
<dbReference type="FunFam" id="2.40.10.170:FF:000002">
    <property type="entry name" value="ATP synthase subunit beta, chloroplastic"/>
    <property type="match status" value="1"/>
</dbReference>
<dbReference type="Gene3D" id="2.40.10.170">
    <property type="match status" value="1"/>
</dbReference>
<dbReference type="Gene3D" id="1.10.1140.10">
    <property type="entry name" value="Bovine Mitochondrial F1-atpase, Atp Synthase Beta Chain, Chain D, domain 3"/>
    <property type="match status" value="1"/>
</dbReference>
<dbReference type="Gene3D" id="3.40.50.300">
    <property type="entry name" value="P-loop containing nucleotide triphosphate hydrolases"/>
    <property type="match status" value="1"/>
</dbReference>
<dbReference type="HAMAP" id="MF_01347">
    <property type="entry name" value="ATP_synth_beta_bact"/>
    <property type="match status" value="1"/>
</dbReference>
<dbReference type="InterPro" id="IPR003593">
    <property type="entry name" value="AAA+_ATPase"/>
</dbReference>
<dbReference type="InterPro" id="IPR055190">
    <property type="entry name" value="ATP-synt_VA_C"/>
</dbReference>
<dbReference type="InterPro" id="IPR005722">
    <property type="entry name" value="ATP_synth_F1_bsu"/>
</dbReference>
<dbReference type="InterPro" id="IPR020003">
    <property type="entry name" value="ATPase_a/bsu_AS"/>
</dbReference>
<dbReference type="InterPro" id="IPR050053">
    <property type="entry name" value="ATPase_alpha/beta_chains"/>
</dbReference>
<dbReference type="InterPro" id="IPR004100">
    <property type="entry name" value="ATPase_F1/V1/A1_a/bsu_N"/>
</dbReference>
<dbReference type="InterPro" id="IPR036121">
    <property type="entry name" value="ATPase_F1/V1/A1_a/bsu_N_sf"/>
</dbReference>
<dbReference type="InterPro" id="IPR000194">
    <property type="entry name" value="ATPase_F1/V1/A1_a/bsu_nucl-bd"/>
</dbReference>
<dbReference type="InterPro" id="IPR024034">
    <property type="entry name" value="ATPase_F1/V1_b/a_C"/>
</dbReference>
<dbReference type="InterPro" id="IPR027417">
    <property type="entry name" value="P-loop_NTPase"/>
</dbReference>
<dbReference type="NCBIfam" id="TIGR01039">
    <property type="entry name" value="atpD"/>
    <property type="match status" value="1"/>
</dbReference>
<dbReference type="PANTHER" id="PTHR15184">
    <property type="entry name" value="ATP SYNTHASE"/>
    <property type="match status" value="1"/>
</dbReference>
<dbReference type="PANTHER" id="PTHR15184:SF71">
    <property type="entry name" value="ATP SYNTHASE SUBUNIT BETA, MITOCHONDRIAL"/>
    <property type="match status" value="1"/>
</dbReference>
<dbReference type="Pfam" id="PF00006">
    <property type="entry name" value="ATP-synt_ab"/>
    <property type="match status" value="1"/>
</dbReference>
<dbReference type="Pfam" id="PF02874">
    <property type="entry name" value="ATP-synt_ab_N"/>
    <property type="match status" value="1"/>
</dbReference>
<dbReference type="Pfam" id="PF22919">
    <property type="entry name" value="ATP-synt_VA_C"/>
    <property type="match status" value="1"/>
</dbReference>
<dbReference type="SMART" id="SM00382">
    <property type="entry name" value="AAA"/>
    <property type="match status" value="1"/>
</dbReference>
<dbReference type="SUPFAM" id="SSF47917">
    <property type="entry name" value="C-terminal domain of alpha and beta subunits of F1 ATP synthase"/>
    <property type="match status" value="1"/>
</dbReference>
<dbReference type="SUPFAM" id="SSF50615">
    <property type="entry name" value="N-terminal domain of alpha and beta subunits of F1 ATP synthase"/>
    <property type="match status" value="1"/>
</dbReference>
<dbReference type="SUPFAM" id="SSF52540">
    <property type="entry name" value="P-loop containing nucleoside triphosphate hydrolases"/>
    <property type="match status" value="1"/>
</dbReference>
<dbReference type="PROSITE" id="PS00152">
    <property type="entry name" value="ATPASE_ALPHA_BETA"/>
    <property type="match status" value="1"/>
</dbReference>